<name>AROC_CHLFF</name>
<evidence type="ECO:0000255" key="1">
    <source>
        <dbReference type="HAMAP-Rule" id="MF_00300"/>
    </source>
</evidence>
<feature type="chain" id="PRO_1000022478" description="Chorismate synthase">
    <location>
        <begin position="1"/>
        <end position="359"/>
    </location>
</feature>
<feature type="binding site" evidence="1">
    <location>
        <position position="47"/>
    </location>
    <ligand>
        <name>NADP(+)</name>
        <dbReference type="ChEBI" id="CHEBI:58349"/>
    </ligand>
</feature>
<feature type="binding site" evidence="1">
    <location>
        <begin position="123"/>
        <end position="125"/>
    </location>
    <ligand>
        <name>FMN</name>
        <dbReference type="ChEBI" id="CHEBI:58210"/>
    </ligand>
</feature>
<feature type="binding site" evidence="1">
    <location>
        <position position="283"/>
    </location>
    <ligand>
        <name>FMN</name>
        <dbReference type="ChEBI" id="CHEBI:58210"/>
    </ligand>
</feature>
<feature type="binding site" evidence="1">
    <location>
        <begin position="298"/>
        <end position="302"/>
    </location>
    <ligand>
        <name>FMN</name>
        <dbReference type="ChEBI" id="CHEBI:58210"/>
    </ligand>
</feature>
<feature type="binding site" evidence="1">
    <location>
        <position position="326"/>
    </location>
    <ligand>
        <name>FMN</name>
        <dbReference type="ChEBI" id="CHEBI:58210"/>
    </ligand>
</feature>
<sequence length="359" mass="38916">MRNRFGCLFSLTTWGESHGPSIGLVIDGCPAGLPLSLEDFVPVMLRRSPGRLGTSQRKEADIVHILSGVYQGKTTGTPIALQIFNTDIDSETYRKQDDRYRPGHGQFAYEKKYGIVDPLGGGRSSARETACRVAAGVVAAKLLAHYDIYCLAFLSKLGKESIKEYPQFTHEFAQSVYSSPFLSPLASDTITKQLMDLQKEKDSLGGVVSFITSPIHESLGEPIFYKVQAVLASALMSIPAAKGFEIGLGFASADKYGSEYIDPFIFEEGKISMSSNNCGGSLGGITMGMPLNGRVAFKPTSSIKQPRLTVMKTGEPTVYSTPKEGRHDPCVAIRAVGVVEAMVNLVLADLLLQQRCSRL</sequence>
<proteinExistence type="inferred from homology"/>
<protein>
    <recommendedName>
        <fullName evidence="1">Chorismate synthase</fullName>
        <shortName evidence="1">CS</shortName>
        <ecNumber evidence="1">4.2.3.5</ecNumber>
    </recommendedName>
    <alternativeName>
        <fullName evidence="1">5-enolpyruvylshikimate-3-phosphate phospholyase</fullName>
    </alternativeName>
</protein>
<keyword id="KW-0028">Amino-acid biosynthesis</keyword>
<keyword id="KW-0057">Aromatic amino acid biosynthesis</keyword>
<keyword id="KW-0274">FAD</keyword>
<keyword id="KW-0285">Flavoprotein</keyword>
<keyword id="KW-0288">FMN</keyword>
<keyword id="KW-0456">Lyase</keyword>
<keyword id="KW-0521">NADP</keyword>
<reference key="1">
    <citation type="journal article" date="2006" name="DNA Res.">
        <title>Genome sequence of the cat pathogen, Chlamydophila felis.</title>
        <authorList>
            <person name="Azuma Y."/>
            <person name="Hirakawa H."/>
            <person name="Yamashita A."/>
            <person name="Cai Y."/>
            <person name="Rahman M.A."/>
            <person name="Suzuki H."/>
            <person name="Mitaku S."/>
            <person name="Toh H."/>
            <person name="Goto S."/>
            <person name="Murakami T."/>
            <person name="Sugi K."/>
            <person name="Hayashi H."/>
            <person name="Fukushi H."/>
            <person name="Hattori M."/>
            <person name="Kuhara S."/>
            <person name="Shirai M."/>
        </authorList>
    </citation>
    <scope>NUCLEOTIDE SEQUENCE [LARGE SCALE GENOMIC DNA]</scope>
    <source>
        <strain>Fe/C-56</strain>
    </source>
</reference>
<accession>Q255H5</accession>
<organism>
    <name type="scientific">Chlamydia felis (strain Fe/C-56)</name>
    <name type="common">Chlamydophila felis</name>
    <dbReference type="NCBI Taxonomy" id="264202"/>
    <lineage>
        <taxon>Bacteria</taxon>
        <taxon>Pseudomonadati</taxon>
        <taxon>Chlamydiota</taxon>
        <taxon>Chlamydiia</taxon>
        <taxon>Chlamydiales</taxon>
        <taxon>Chlamydiaceae</taxon>
        <taxon>Chlamydia/Chlamydophila group</taxon>
        <taxon>Chlamydia</taxon>
    </lineage>
</organism>
<dbReference type="EC" id="4.2.3.5" evidence="1"/>
<dbReference type="EMBL" id="AP006861">
    <property type="protein sequence ID" value="BAE81063.1"/>
    <property type="molecule type" value="Genomic_DNA"/>
</dbReference>
<dbReference type="RefSeq" id="WP_011457844.1">
    <property type="nucleotide sequence ID" value="NC_007899.1"/>
</dbReference>
<dbReference type="SMR" id="Q255H5"/>
<dbReference type="STRING" id="264202.CF0291"/>
<dbReference type="KEGG" id="cfe:CF0291"/>
<dbReference type="eggNOG" id="COG0082">
    <property type="taxonomic scope" value="Bacteria"/>
</dbReference>
<dbReference type="HOGENOM" id="CLU_034547_0_0_0"/>
<dbReference type="OrthoDB" id="9771806at2"/>
<dbReference type="UniPathway" id="UPA00053">
    <property type="reaction ID" value="UER00090"/>
</dbReference>
<dbReference type="Proteomes" id="UP000001260">
    <property type="component" value="Chromosome"/>
</dbReference>
<dbReference type="GO" id="GO:0005829">
    <property type="term" value="C:cytosol"/>
    <property type="evidence" value="ECO:0007669"/>
    <property type="project" value="TreeGrafter"/>
</dbReference>
<dbReference type="GO" id="GO:0004107">
    <property type="term" value="F:chorismate synthase activity"/>
    <property type="evidence" value="ECO:0007669"/>
    <property type="project" value="UniProtKB-UniRule"/>
</dbReference>
<dbReference type="GO" id="GO:0010181">
    <property type="term" value="F:FMN binding"/>
    <property type="evidence" value="ECO:0007669"/>
    <property type="project" value="TreeGrafter"/>
</dbReference>
<dbReference type="GO" id="GO:0008652">
    <property type="term" value="P:amino acid biosynthetic process"/>
    <property type="evidence" value="ECO:0007669"/>
    <property type="project" value="UniProtKB-KW"/>
</dbReference>
<dbReference type="GO" id="GO:0009073">
    <property type="term" value="P:aromatic amino acid family biosynthetic process"/>
    <property type="evidence" value="ECO:0007669"/>
    <property type="project" value="UniProtKB-KW"/>
</dbReference>
<dbReference type="GO" id="GO:0009423">
    <property type="term" value="P:chorismate biosynthetic process"/>
    <property type="evidence" value="ECO:0007669"/>
    <property type="project" value="UniProtKB-UniRule"/>
</dbReference>
<dbReference type="CDD" id="cd07304">
    <property type="entry name" value="Chorismate_synthase"/>
    <property type="match status" value="1"/>
</dbReference>
<dbReference type="Gene3D" id="3.60.150.10">
    <property type="entry name" value="Chorismate synthase AroC"/>
    <property type="match status" value="1"/>
</dbReference>
<dbReference type="HAMAP" id="MF_00300">
    <property type="entry name" value="Chorismate_synth"/>
    <property type="match status" value="1"/>
</dbReference>
<dbReference type="InterPro" id="IPR000453">
    <property type="entry name" value="Chorismate_synth"/>
</dbReference>
<dbReference type="InterPro" id="IPR035904">
    <property type="entry name" value="Chorismate_synth_AroC_sf"/>
</dbReference>
<dbReference type="InterPro" id="IPR020541">
    <property type="entry name" value="Chorismate_synthase_CS"/>
</dbReference>
<dbReference type="NCBIfam" id="TIGR00033">
    <property type="entry name" value="aroC"/>
    <property type="match status" value="1"/>
</dbReference>
<dbReference type="NCBIfam" id="NF003793">
    <property type="entry name" value="PRK05382.1"/>
    <property type="match status" value="1"/>
</dbReference>
<dbReference type="PANTHER" id="PTHR21085">
    <property type="entry name" value="CHORISMATE SYNTHASE"/>
    <property type="match status" value="1"/>
</dbReference>
<dbReference type="PANTHER" id="PTHR21085:SF0">
    <property type="entry name" value="CHORISMATE SYNTHASE"/>
    <property type="match status" value="1"/>
</dbReference>
<dbReference type="Pfam" id="PF01264">
    <property type="entry name" value="Chorismate_synt"/>
    <property type="match status" value="1"/>
</dbReference>
<dbReference type="PIRSF" id="PIRSF001456">
    <property type="entry name" value="Chorismate_synth"/>
    <property type="match status" value="1"/>
</dbReference>
<dbReference type="SUPFAM" id="SSF103263">
    <property type="entry name" value="Chorismate synthase, AroC"/>
    <property type="match status" value="1"/>
</dbReference>
<dbReference type="PROSITE" id="PS00787">
    <property type="entry name" value="CHORISMATE_SYNTHASE_1"/>
    <property type="match status" value="1"/>
</dbReference>
<dbReference type="PROSITE" id="PS00788">
    <property type="entry name" value="CHORISMATE_SYNTHASE_2"/>
    <property type="match status" value="1"/>
</dbReference>
<dbReference type="PROSITE" id="PS00789">
    <property type="entry name" value="CHORISMATE_SYNTHASE_3"/>
    <property type="match status" value="1"/>
</dbReference>
<comment type="function">
    <text evidence="1">Catalyzes the anti-1,4-elimination of the C-3 phosphate and the C-6 proR hydrogen from 5-enolpyruvylshikimate-3-phosphate (EPSP) to yield chorismate, which is the branch point compound that serves as the starting substrate for the three terminal pathways of aromatic amino acid biosynthesis. This reaction introduces a second double bond into the aromatic ring system.</text>
</comment>
<comment type="catalytic activity">
    <reaction evidence="1">
        <text>5-O-(1-carboxyvinyl)-3-phosphoshikimate = chorismate + phosphate</text>
        <dbReference type="Rhea" id="RHEA:21020"/>
        <dbReference type="ChEBI" id="CHEBI:29748"/>
        <dbReference type="ChEBI" id="CHEBI:43474"/>
        <dbReference type="ChEBI" id="CHEBI:57701"/>
        <dbReference type="EC" id="4.2.3.5"/>
    </reaction>
</comment>
<comment type="cofactor">
    <cofactor evidence="1">
        <name>FMNH2</name>
        <dbReference type="ChEBI" id="CHEBI:57618"/>
    </cofactor>
    <text evidence="1">Reduced FMN (FMNH(2)).</text>
</comment>
<comment type="pathway">
    <text evidence="1">Metabolic intermediate biosynthesis; chorismate biosynthesis; chorismate from D-erythrose 4-phosphate and phosphoenolpyruvate: step 7/7.</text>
</comment>
<comment type="subunit">
    <text evidence="1">Homotetramer.</text>
</comment>
<comment type="similarity">
    <text evidence="1">Belongs to the chorismate synthase family.</text>
</comment>
<gene>
    <name evidence="1" type="primary">aroC</name>
    <name type="ordered locus">CF0291</name>
</gene>